<sequence>MALALSDVKRIAHLARIEISDDEAAQTLAQLNNFFSLVEQMQAVDTSGIEPLAHPLSAVRDMVQRLREDVVTESDRRADYQRPAPATEDGLYLVPKVIE</sequence>
<reference key="1">
    <citation type="journal article" date="2006" name="Nat. Biotechnol.">
        <title>Genome sequence of the bioplastic-producing 'Knallgas' bacterium Ralstonia eutropha H16.</title>
        <authorList>
            <person name="Pohlmann A."/>
            <person name="Fricke W.F."/>
            <person name="Reinecke F."/>
            <person name="Kusian B."/>
            <person name="Liesegang H."/>
            <person name="Cramm R."/>
            <person name="Eitinger T."/>
            <person name="Ewering C."/>
            <person name="Poetter M."/>
            <person name="Schwartz E."/>
            <person name="Strittmatter A."/>
            <person name="Voss I."/>
            <person name="Gottschalk G."/>
            <person name="Steinbuechel A."/>
            <person name="Friedrich B."/>
            <person name="Bowien B."/>
        </authorList>
    </citation>
    <scope>NUCLEOTIDE SEQUENCE [LARGE SCALE GENOMIC DNA]</scope>
    <source>
        <strain>ATCC 17699 / DSM 428 / KCTC 22496 / NCIMB 10442 / H16 / Stanier 337</strain>
    </source>
</reference>
<name>GATC_CUPNH</name>
<keyword id="KW-0067">ATP-binding</keyword>
<keyword id="KW-0436">Ligase</keyword>
<keyword id="KW-0547">Nucleotide-binding</keyword>
<keyword id="KW-0648">Protein biosynthesis</keyword>
<keyword id="KW-1185">Reference proteome</keyword>
<organism>
    <name type="scientific">Cupriavidus necator (strain ATCC 17699 / DSM 428 / KCTC 22496 / NCIMB 10442 / H16 / Stanier 337)</name>
    <name type="common">Ralstonia eutropha</name>
    <dbReference type="NCBI Taxonomy" id="381666"/>
    <lineage>
        <taxon>Bacteria</taxon>
        <taxon>Pseudomonadati</taxon>
        <taxon>Pseudomonadota</taxon>
        <taxon>Betaproteobacteria</taxon>
        <taxon>Burkholderiales</taxon>
        <taxon>Burkholderiaceae</taxon>
        <taxon>Cupriavidus</taxon>
    </lineage>
</organism>
<accession>Q0KFF7</accession>
<gene>
    <name evidence="1" type="primary">gatC</name>
    <name type="ordered locus">H16_A0112</name>
</gene>
<feature type="chain" id="PRO_1000016186" description="Aspartyl/glutamyl-tRNA(Asn/Gln) amidotransferase subunit C">
    <location>
        <begin position="1"/>
        <end position="99"/>
    </location>
</feature>
<comment type="function">
    <text evidence="1">Allows the formation of correctly charged Asn-tRNA(Asn) or Gln-tRNA(Gln) through the transamidation of misacylated Asp-tRNA(Asn) or Glu-tRNA(Gln) in organisms which lack either or both of asparaginyl-tRNA or glutaminyl-tRNA synthetases. The reaction takes place in the presence of glutamine and ATP through an activated phospho-Asp-tRNA(Asn) or phospho-Glu-tRNA(Gln).</text>
</comment>
<comment type="catalytic activity">
    <reaction evidence="1">
        <text>L-glutamyl-tRNA(Gln) + L-glutamine + ATP + H2O = L-glutaminyl-tRNA(Gln) + L-glutamate + ADP + phosphate + H(+)</text>
        <dbReference type="Rhea" id="RHEA:17521"/>
        <dbReference type="Rhea" id="RHEA-COMP:9681"/>
        <dbReference type="Rhea" id="RHEA-COMP:9684"/>
        <dbReference type="ChEBI" id="CHEBI:15377"/>
        <dbReference type="ChEBI" id="CHEBI:15378"/>
        <dbReference type="ChEBI" id="CHEBI:29985"/>
        <dbReference type="ChEBI" id="CHEBI:30616"/>
        <dbReference type="ChEBI" id="CHEBI:43474"/>
        <dbReference type="ChEBI" id="CHEBI:58359"/>
        <dbReference type="ChEBI" id="CHEBI:78520"/>
        <dbReference type="ChEBI" id="CHEBI:78521"/>
        <dbReference type="ChEBI" id="CHEBI:456216"/>
    </reaction>
</comment>
<comment type="catalytic activity">
    <reaction evidence="1">
        <text>L-aspartyl-tRNA(Asn) + L-glutamine + ATP + H2O = L-asparaginyl-tRNA(Asn) + L-glutamate + ADP + phosphate + 2 H(+)</text>
        <dbReference type="Rhea" id="RHEA:14513"/>
        <dbReference type="Rhea" id="RHEA-COMP:9674"/>
        <dbReference type="Rhea" id="RHEA-COMP:9677"/>
        <dbReference type="ChEBI" id="CHEBI:15377"/>
        <dbReference type="ChEBI" id="CHEBI:15378"/>
        <dbReference type="ChEBI" id="CHEBI:29985"/>
        <dbReference type="ChEBI" id="CHEBI:30616"/>
        <dbReference type="ChEBI" id="CHEBI:43474"/>
        <dbReference type="ChEBI" id="CHEBI:58359"/>
        <dbReference type="ChEBI" id="CHEBI:78515"/>
        <dbReference type="ChEBI" id="CHEBI:78516"/>
        <dbReference type="ChEBI" id="CHEBI:456216"/>
    </reaction>
</comment>
<comment type="subunit">
    <text evidence="1">Heterotrimer of A, B and C subunits.</text>
</comment>
<comment type="similarity">
    <text evidence="1">Belongs to the GatC family.</text>
</comment>
<dbReference type="EC" id="6.3.5.-" evidence="1"/>
<dbReference type="EMBL" id="AM260479">
    <property type="protein sequence ID" value="CAJ91264.1"/>
    <property type="molecule type" value="Genomic_DNA"/>
</dbReference>
<dbReference type="RefSeq" id="WP_011614358.1">
    <property type="nucleotide sequence ID" value="NC_008313.1"/>
</dbReference>
<dbReference type="SMR" id="Q0KFF7"/>
<dbReference type="STRING" id="381666.H16_A0112"/>
<dbReference type="KEGG" id="reh:H16_A0112"/>
<dbReference type="PATRIC" id="fig|381666.6.peg.462"/>
<dbReference type="eggNOG" id="COG0721">
    <property type="taxonomic scope" value="Bacteria"/>
</dbReference>
<dbReference type="HOGENOM" id="CLU_105899_2_2_4"/>
<dbReference type="OrthoDB" id="9794326at2"/>
<dbReference type="Proteomes" id="UP000008210">
    <property type="component" value="Chromosome 1"/>
</dbReference>
<dbReference type="GO" id="GO:0050566">
    <property type="term" value="F:asparaginyl-tRNA synthase (glutamine-hydrolyzing) activity"/>
    <property type="evidence" value="ECO:0007669"/>
    <property type="project" value="RHEA"/>
</dbReference>
<dbReference type="GO" id="GO:0005524">
    <property type="term" value="F:ATP binding"/>
    <property type="evidence" value="ECO:0007669"/>
    <property type="project" value="UniProtKB-KW"/>
</dbReference>
<dbReference type="GO" id="GO:0050567">
    <property type="term" value="F:glutaminyl-tRNA synthase (glutamine-hydrolyzing) activity"/>
    <property type="evidence" value="ECO:0007669"/>
    <property type="project" value="UniProtKB-UniRule"/>
</dbReference>
<dbReference type="GO" id="GO:0070681">
    <property type="term" value="P:glutaminyl-tRNAGln biosynthesis via transamidation"/>
    <property type="evidence" value="ECO:0007669"/>
    <property type="project" value="TreeGrafter"/>
</dbReference>
<dbReference type="GO" id="GO:0006450">
    <property type="term" value="P:regulation of translational fidelity"/>
    <property type="evidence" value="ECO:0007669"/>
    <property type="project" value="InterPro"/>
</dbReference>
<dbReference type="GO" id="GO:0006412">
    <property type="term" value="P:translation"/>
    <property type="evidence" value="ECO:0007669"/>
    <property type="project" value="UniProtKB-UniRule"/>
</dbReference>
<dbReference type="Gene3D" id="1.10.20.60">
    <property type="entry name" value="Glu-tRNAGln amidotransferase C subunit, N-terminal domain"/>
    <property type="match status" value="1"/>
</dbReference>
<dbReference type="HAMAP" id="MF_00122">
    <property type="entry name" value="GatC"/>
    <property type="match status" value="1"/>
</dbReference>
<dbReference type="InterPro" id="IPR036113">
    <property type="entry name" value="Asp/Glu-ADT_sf_sub_c"/>
</dbReference>
<dbReference type="InterPro" id="IPR003837">
    <property type="entry name" value="GatC"/>
</dbReference>
<dbReference type="NCBIfam" id="TIGR00135">
    <property type="entry name" value="gatC"/>
    <property type="match status" value="1"/>
</dbReference>
<dbReference type="PANTHER" id="PTHR15004">
    <property type="entry name" value="GLUTAMYL-TRNA(GLN) AMIDOTRANSFERASE SUBUNIT C, MITOCHONDRIAL"/>
    <property type="match status" value="1"/>
</dbReference>
<dbReference type="PANTHER" id="PTHR15004:SF0">
    <property type="entry name" value="GLUTAMYL-TRNA(GLN) AMIDOTRANSFERASE SUBUNIT C, MITOCHONDRIAL"/>
    <property type="match status" value="1"/>
</dbReference>
<dbReference type="Pfam" id="PF02686">
    <property type="entry name" value="GatC"/>
    <property type="match status" value="1"/>
</dbReference>
<dbReference type="SUPFAM" id="SSF141000">
    <property type="entry name" value="Glu-tRNAGln amidotransferase C subunit"/>
    <property type="match status" value="1"/>
</dbReference>
<evidence type="ECO:0000255" key="1">
    <source>
        <dbReference type="HAMAP-Rule" id="MF_00122"/>
    </source>
</evidence>
<protein>
    <recommendedName>
        <fullName evidence="1">Aspartyl/glutamyl-tRNA(Asn/Gln) amidotransferase subunit C</fullName>
        <shortName evidence="1">Asp/Glu-ADT subunit C</shortName>
        <ecNumber evidence="1">6.3.5.-</ecNumber>
    </recommendedName>
</protein>
<proteinExistence type="inferred from homology"/>